<organism evidence="6">
    <name type="scientific">Saccharopolyspora erythraea (strain ATCC 11635 / DSM 40517 / JCM 4748 / NBRC 13426 / NCIMB 8594 / NRRL 2338)</name>
    <dbReference type="NCBI Taxonomy" id="405948"/>
    <lineage>
        <taxon>Bacteria</taxon>
        <taxon>Bacillati</taxon>
        <taxon>Actinomycetota</taxon>
        <taxon>Actinomycetes</taxon>
        <taxon>Pseudonocardiales</taxon>
        <taxon>Pseudonocardiaceae</taxon>
        <taxon>Saccharopolyspora</taxon>
    </lineage>
</organism>
<accession>A4FB46</accession>
<protein>
    <recommendedName>
        <fullName evidence="4">Sporulation-specific cell division protein SsgB</fullName>
    </recommendedName>
    <alternativeName>
        <fullName evidence="4">Sporulation of Streptomyces griseus-like protein B</fullName>
    </alternativeName>
    <alternativeName>
        <fullName evidence="4">SsgA-like protein B</fullName>
        <shortName evidence="4">SALP B</shortName>
    </alternativeName>
</protein>
<proteinExistence type="inferred from homology"/>
<evidence type="ECO:0000250" key="1">
    <source>
        <dbReference type="UniProtKB" id="Q47N25"/>
    </source>
</evidence>
<evidence type="ECO:0000250" key="2">
    <source>
        <dbReference type="UniProtKB" id="Q9L268"/>
    </source>
</evidence>
<evidence type="ECO:0000269" key="3">
    <source>
    </source>
</evidence>
<evidence type="ECO:0000303" key="4">
    <source>
    </source>
</evidence>
<evidence type="ECO:0000305" key="5"/>
<evidence type="ECO:0000312" key="6">
    <source>
        <dbReference type="EMBL" id="CAM01271.1"/>
    </source>
</evidence>
<evidence type="ECO:0000312" key="7">
    <source>
        <dbReference type="Proteomes" id="UP000006728"/>
    </source>
</evidence>
<keyword id="KW-0131">Cell cycle</keyword>
<keyword id="KW-0132">Cell division</keyword>
<keyword id="KW-0175">Coiled coil</keyword>
<keyword id="KW-1185">Reference proteome</keyword>
<keyword id="KW-0717">Septation</keyword>
<keyword id="KW-0749">Sporulation</keyword>
<reference key="1">
    <citation type="journal article" date="2009" name="J. Biol. Chem.">
        <title>Structural and functional characterizations of SsgB, a conserved activator of developmental cell division in morphologically complex actinomycetes.</title>
        <authorList>
            <person name="Xu Q."/>
            <person name="Traag B.A."/>
            <person name="Willemse J."/>
            <person name="McMullan D."/>
            <person name="Miller M.D."/>
            <person name="Elsliger M.A."/>
            <person name="Abdubek P."/>
            <person name="Astakhova T."/>
            <person name="Axelrod H.L."/>
            <person name="Bakolitsa C."/>
            <person name="Carlton D."/>
            <person name="Chen C."/>
            <person name="Chiu H.J."/>
            <person name="Chruszcz M."/>
            <person name="Clayton T."/>
            <person name="Das D."/>
            <person name="Deller M.C."/>
            <person name="Duan L."/>
            <person name="Ellrott K."/>
            <person name="Ernst D."/>
            <person name="Farr C.L."/>
            <person name="Feuerhelm J."/>
            <person name="Grant J.C."/>
            <person name="Grzechnik A."/>
            <person name="Grzechnik S.K."/>
            <person name="Han G.W."/>
            <person name="Jaroszewski L."/>
            <person name="Jin K.K."/>
            <person name="Klock H.E."/>
            <person name="Knuth M.W."/>
            <person name="Kozbial P."/>
            <person name="Krishna S.S."/>
            <person name="Kumar A."/>
            <person name="Marciano D."/>
            <person name="Minor W."/>
            <person name="Mommaas A.M."/>
            <person name="Morse A.T."/>
            <person name="Nigoghossian E."/>
            <person name="Nopakun A."/>
            <person name="Okach L."/>
            <person name="Oommachen S."/>
            <person name="Paulsen J."/>
            <person name="Puckett C."/>
            <person name="Reyes R."/>
            <person name="Rife C.L."/>
            <person name="Sefcovic N."/>
            <person name="Tien H.J."/>
            <person name="Trame C.B."/>
            <person name="van den Bedem H."/>
            <person name="Wang S."/>
            <person name="Weekes D."/>
            <person name="Hodgson K.O."/>
            <person name="Wooley J."/>
            <person name="Deacon A.M."/>
            <person name="Godzik A."/>
            <person name="Lesley S.A."/>
            <person name="Wilson I.A."/>
            <person name="van Wezel G.P."/>
        </authorList>
    </citation>
    <scope>NUCLEOTIDE SEQUENCE [GENOMIC DNA]</scope>
    <scope>FUNCTION</scope>
    <source>
        <strain evidence="4">ATCC 11635 / DSM 40517 / JCM 4748 / NBRC 13426 / NCIMB 8594 / NRRL 2338</strain>
    </source>
</reference>
<reference evidence="6 7" key="2">
    <citation type="journal article" date="2007" name="Nat. Biotechnol.">
        <title>Complete genome sequence of the erythromycin-producing bacterium Saccharopolyspora erythraea NRRL23338.</title>
        <authorList>
            <person name="Oliynyk M."/>
            <person name="Samborskyy M."/>
            <person name="Lester J.B."/>
            <person name="Mironenko T."/>
            <person name="Scott N."/>
            <person name="Dickens S."/>
            <person name="Haydock S.F."/>
            <person name="Leadlay P.F."/>
        </authorList>
    </citation>
    <scope>NUCLEOTIDE SEQUENCE [LARGE SCALE GENOMIC DNA]</scope>
    <source>
        <strain evidence="7">ATCC 11635 / DSM 40517 / JCM 4748 / NBRC 13426 / NCIMB 8594 / NRRL 2338</strain>
    </source>
</reference>
<dbReference type="EMBL" id="AM420293">
    <property type="protein sequence ID" value="CAM01271.1"/>
    <property type="molecule type" value="Genomic_DNA"/>
</dbReference>
<dbReference type="RefSeq" id="WP_011873518.1">
    <property type="nucleotide sequence ID" value="NC_009142.1"/>
</dbReference>
<dbReference type="SMR" id="A4FB46"/>
<dbReference type="STRING" id="405948.SACE_1961"/>
<dbReference type="KEGG" id="sen:SACE_1961"/>
<dbReference type="eggNOG" id="ENOG5032RFA">
    <property type="taxonomic scope" value="Bacteria"/>
</dbReference>
<dbReference type="HOGENOM" id="CLU_126599_0_1_11"/>
<dbReference type="OrthoDB" id="3853096at2"/>
<dbReference type="Proteomes" id="UP000006728">
    <property type="component" value="Chromosome"/>
</dbReference>
<dbReference type="GO" id="GO:0030428">
    <property type="term" value="C:cell septum"/>
    <property type="evidence" value="ECO:0007669"/>
    <property type="project" value="UniProtKB-SubCell"/>
</dbReference>
<dbReference type="GO" id="GO:0000917">
    <property type="term" value="P:division septum assembly"/>
    <property type="evidence" value="ECO:0007669"/>
    <property type="project" value="UniProtKB-KW"/>
</dbReference>
<dbReference type="GO" id="GO:0030435">
    <property type="term" value="P:sporulation resulting in formation of a cellular spore"/>
    <property type="evidence" value="ECO:0007669"/>
    <property type="project" value="UniProtKB-KW"/>
</dbReference>
<dbReference type="Gene3D" id="2.30.31.20">
    <property type="entry name" value="Sporulation-specific cell division protein SsgB"/>
    <property type="match status" value="1"/>
</dbReference>
<dbReference type="InterPro" id="IPR006776">
    <property type="entry name" value="SsgB"/>
</dbReference>
<dbReference type="InterPro" id="IPR038658">
    <property type="entry name" value="SsgB_sf"/>
</dbReference>
<dbReference type="Pfam" id="PF04686">
    <property type="entry name" value="SsgA"/>
    <property type="match status" value="1"/>
</dbReference>
<comment type="function">
    <text evidence="1 2 3">Involved in sporulation-specific cell division (PubMed:19567872). Required for early stages of sporulation. Important in the process of growth cessation prior to sporulation-specific cell division. Recruits cell division protein FtsZ to the future septum sites and tethers the contractile ring structure (Z ring) to the cytoplasmic membrane during sporulation. Stimulates polymerization and filament length of FtsZ in vitro (By similarity).</text>
</comment>
<comment type="subunit">
    <text evidence="1 2">Interacts with SsgA. Interacts with FtsZ (via N-terminus).</text>
</comment>
<comment type="subcellular location">
    <subcellularLocation>
        <location evidence="2">Cell septum</location>
    </subcellularLocation>
    <text evidence="2">Localizes to the divisome in sporogenic aerial hyphae in a ladder-like manner. Temporospatial localization is controlled by SsgA and it colocalizes with SsgA in presporulation foci. Localizes to the septum sites prior to FtsZ and after that colocalizes with FtsZ at the divisome throughout cell division.</text>
</comment>
<comment type="similarity">
    <text evidence="5">Belongs to the SsgA family.</text>
</comment>
<gene>
    <name evidence="4" type="primary">ssgB</name>
    <name evidence="6" type="ordered locus">SACE_1961</name>
</gene>
<sequence length="141" mass="15446">MRNDHVTLRSTAVFDLLAPQTPAVPVQVELRYDTRDPYAVVAAFRTGRAGWVEWVFARDLLADGLIAHAGVGDVTIRPAVDDPEVVVIELSSPSGHAVFEASAQELADFLDRTYDVVVPGNENLWVNVDDALTRLLPHDLS</sequence>
<feature type="chain" id="PRO_0000435312" description="Sporulation-specific cell division protein SsgB">
    <location>
        <begin position="1"/>
        <end position="141"/>
    </location>
</feature>
<name>SSGB_SACEN</name>